<sequence>MQPETQESLSTRFAAQQEIQLTLIEKESYDLKDHLAYWKAVRLENVIAYYARKEHITKLGLQPLPTLAVTEYKAKEAINIQLLIQSLLKSEFALERWTLAETSAETINSSPRNCFKKVPFIVNVWFDNDERNSFPYTCWDFIYYQDDQNKWHKTEGLVDHNGCYYVDLNGDFVYFTLFQPDAVKYGKTGLWTVRFKNKTISASVTSSSRNTNPSSESRVGLSTSSSSESPRRRPSISENSNTESPTSSTSRLRERRRREPRESGTTDTTPRRRGTKRKLGSDSAPTPSEVGSRSTTLARHGYSRLGRLQEEARDPPLVLFTGQQNNLKCWRNRCTTKYASLFLCFSSVWKWLGPNSDGGAAKVLVAFKSDAQRQVFLNTVHIPKGTTITLGRLDSL</sequence>
<protein>
    <recommendedName>
        <fullName evidence="1">Regulatory protein E2</fullName>
    </recommendedName>
</protein>
<proteinExistence type="inferred from homology"/>
<dbReference type="EMBL" id="U31789">
    <property type="protein sequence ID" value="AAA79467.1"/>
    <property type="molecule type" value="Genomic_DNA"/>
</dbReference>
<dbReference type="RefSeq" id="NP_043419.1">
    <property type="nucleotide sequence ID" value="NC_001690.1"/>
</dbReference>
<dbReference type="SMR" id="Q80923"/>
<dbReference type="GeneID" id="1403624"/>
<dbReference type="KEGG" id="vg:1403624"/>
<dbReference type="OrthoDB" id="15886at10239"/>
<dbReference type="Proteomes" id="UP000112710">
    <property type="component" value="Genome"/>
</dbReference>
<dbReference type="GO" id="GO:0042025">
    <property type="term" value="C:host cell nucleus"/>
    <property type="evidence" value="ECO:0007669"/>
    <property type="project" value="UniProtKB-SubCell"/>
</dbReference>
<dbReference type="GO" id="GO:0003677">
    <property type="term" value="F:DNA binding"/>
    <property type="evidence" value="ECO:0007669"/>
    <property type="project" value="UniProtKB-UniRule"/>
</dbReference>
<dbReference type="GO" id="GO:0003700">
    <property type="term" value="F:DNA-binding transcription factor activity"/>
    <property type="evidence" value="ECO:0007669"/>
    <property type="project" value="UniProtKB-UniRule"/>
</dbReference>
<dbReference type="GO" id="GO:0000166">
    <property type="term" value="F:nucleotide binding"/>
    <property type="evidence" value="ECO:0007669"/>
    <property type="project" value="UniProtKB-UniRule"/>
</dbReference>
<dbReference type="GO" id="GO:0006260">
    <property type="term" value="P:DNA replication"/>
    <property type="evidence" value="ECO:0007669"/>
    <property type="project" value="UniProtKB-KW"/>
</dbReference>
<dbReference type="GO" id="GO:0006351">
    <property type="term" value="P:DNA-templated transcription"/>
    <property type="evidence" value="ECO:0007669"/>
    <property type="project" value="UniProtKB-UniRule"/>
</dbReference>
<dbReference type="GO" id="GO:0006275">
    <property type="term" value="P:regulation of DNA replication"/>
    <property type="evidence" value="ECO:0007669"/>
    <property type="project" value="UniProtKB-UniRule"/>
</dbReference>
<dbReference type="GO" id="GO:0039693">
    <property type="term" value="P:viral DNA genome replication"/>
    <property type="evidence" value="ECO:0007669"/>
    <property type="project" value="UniProtKB-UniRule"/>
</dbReference>
<dbReference type="Gene3D" id="3.30.70.330">
    <property type="match status" value="1"/>
</dbReference>
<dbReference type="Gene3D" id="1.10.287.30">
    <property type="entry name" value="E2 (early) protein, N terminal domain, subdomain 1"/>
    <property type="match status" value="1"/>
</dbReference>
<dbReference type="Gene3D" id="2.170.200.10">
    <property type="entry name" value="Papillomavirus E2 early protein domain"/>
    <property type="match status" value="1"/>
</dbReference>
<dbReference type="HAMAP" id="MF_04001">
    <property type="entry name" value="PPV_E2"/>
    <property type="match status" value="1"/>
</dbReference>
<dbReference type="InterPro" id="IPR035975">
    <property type="entry name" value="E2/EBNA1_C_sf"/>
</dbReference>
<dbReference type="InterPro" id="IPR012677">
    <property type="entry name" value="Nucleotide-bd_a/b_plait_sf"/>
</dbReference>
<dbReference type="InterPro" id="IPR000427">
    <property type="entry name" value="Papillomavirus_E2_C"/>
</dbReference>
<dbReference type="InterPro" id="IPR001866">
    <property type="entry name" value="PPV_E2_N"/>
</dbReference>
<dbReference type="InterPro" id="IPR033668">
    <property type="entry name" value="Reg_prot_E2"/>
</dbReference>
<dbReference type="InterPro" id="IPR036050">
    <property type="entry name" value="Regulatory_protein_E2_N"/>
</dbReference>
<dbReference type="InterPro" id="IPR042503">
    <property type="entry name" value="Regulatory_protein_E2_N_1"/>
</dbReference>
<dbReference type="InterPro" id="IPR042504">
    <property type="entry name" value="Regulatory_protein_E2_N_2"/>
</dbReference>
<dbReference type="Pfam" id="PF00511">
    <property type="entry name" value="PPV_E2_C"/>
    <property type="match status" value="1"/>
</dbReference>
<dbReference type="Pfam" id="PF00508">
    <property type="entry name" value="PPV_E2_N"/>
    <property type="match status" value="1"/>
</dbReference>
<dbReference type="SUPFAM" id="SSF51332">
    <property type="entry name" value="E2 regulatory, transactivation domain"/>
    <property type="match status" value="1"/>
</dbReference>
<dbReference type="SUPFAM" id="SSF54957">
    <property type="entry name" value="Viral DNA-binding domain"/>
    <property type="match status" value="1"/>
</dbReference>
<feature type="chain" id="PRO_0000133226" description="Regulatory protein E2">
    <location>
        <begin position="1"/>
        <end position="396"/>
    </location>
</feature>
<feature type="region of interest" description="Transactivation domain" evidence="1">
    <location>
        <begin position="1"/>
        <end position="207"/>
    </location>
</feature>
<feature type="region of interest" description="Disordered" evidence="2">
    <location>
        <begin position="202"/>
        <end position="298"/>
    </location>
</feature>
<feature type="region of interest" description="DNA-binding domain" evidence="1">
    <location>
        <begin position="314"/>
        <end position="396"/>
    </location>
</feature>
<feature type="compositionally biased region" description="Low complexity" evidence="2">
    <location>
        <begin position="203"/>
        <end position="228"/>
    </location>
</feature>
<feature type="compositionally biased region" description="Low complexity" evidence="2">
    <location>
        <begin position="236"/>
        <end position="250"/>
    </location>
</feature>
<feature type="compositionally biased region" description="Polar residues" evidence="2">
    <location>
        <begin position="283"/>
        <end position="297"/>
    </location>
</feature>
<organism>
    <name type="scientific">Human papillomavirus type 48</name>
    <dbReference type="NCBI Taxonomy" id="40538"/>
    <lineage>
        <taxon>Viruses</taxon>
        <taxon>Monodnaviria</taxon>
        <taxon>Shotokuvirae</taxon>
        <taxon>Cossaviricota</taxon>
        <taxon>Papovaviricetes</taxon>
        <taxon>Zurhausenvirales</taxon>
        <taxon>Papillomaviridae</taxon>
        <taxon>Firstpapillomavirinae</taxon>
        <taxon>Gammapapillomavirus</taxon>
        <taxon>Gammapapillomavirus 2</taxon>
    </lineage>
</organism>
<comment type="function">
    <text evidence="1">Plays a role in the initiation of viral DNA replication. A dimer of E2 interacts with a dimer of E1 in order to improve specificity of E1 DNA binding activity. Once the complex recognizes and binds DNA at specific sites, the E2 dimer is removed from DNA. E2 also regulates viral transcription through binding to the E2RE response element (5'-ACCNNNNNNGGT-3') present in multiple copies in the regulatory regions of the viral genome. Activates or represses transcription depending on E2RE's position with regards to proximal promoter elements including the TATA-box. Repression occurs by sterically hindering the assembly of the transcription initiation complex.</text>
</comment>
<comment type="subunit">
    <text evidence="1">Binds DNA as homodimer. Interacts with protein E1; this interaction greatly increases E1 DNA-binding activity. Interacts with protein L1; this interaction enhances E2-dependent replication and transcription activation. Interacts with protein L2; this interaction inhibits E2 transcriptional activity but not DNA replication function E2. Interacts with protein E7; this interaction inhibits E7 oncogenic activity. Interacts with host TAF1; this interaction modulates E2-dependent transcriptional regulation. Interacts with host BRD4; this interaction mediates E2 transcriptional activation function. Additionally, the interaction with host BRD4 on mitotic chromosomes mediates tethering of the viral genome. Interacts with host TOPBP1; this interaction is required for optimal viral DNA replication.</text>
</comment>
<comment type="subcellular location">
    <subcellularLocation>
        <location evidence="1">Host nucleus</location>
    </subcellularLocation>
</comment>
<comment type="PTM">
    <text evidence="1">Phosphorylated.</text>
</comment>
<comment type="similarity">
    <text evidence="1">Belongs to the papillomaviridae E2 protein family.</text>
</comment>
<name>VE2_HPV48</name>
<gene>
    <name evidence="1" type="primary">E2</name>
</gene>
<keyword id="KW-0010">Activator</keyword>
<keyword id="KW-0235">DNA replication</keyword>
<keyword id="KW-0238">DNA-binding</keyword>
<keyword id="KW-0244">Early protein</keyword>
<keyword id="KW-1048">Host nucleus</keyword>
<keyword id="KW-0597">Phosphoprotein</keyword>
<keyword id="KW-1185">Reference proteome</keyword>
<keyword id="KW-0678">Repressor</keyword>
<keyword id="KW-0804">Transcription</keyword>
<keyword id="KW-0805">Transcription regulation</keyword>
<accession>Q80923</accession>
<evidence type="ECO:0000255" key="1">
    <source>
        <dbReference type="HAMAP-Rule" id="MF_04001"/>
    </source>
</evidence>
<evidence type="ECO:0000256" key="2">
    <source>
        <dbReference type="SAM" id="MobiDB-lite"/>
    </source>
</evidence>
<organismHost>
    <name type="scientific">Homo sapiens</name>
    <name type="common">Human</name>
    <dbReference type="NCBI Taxonomy" id="9606"/>
</organismHost>
<reference key="1">
    <citation type="submission" date="1995-10" db="EMBL/GenBank/DDBJ databases">
        <authorList>
            <person name="Delius H."/>
        </authorList>
    </citation>
    <scope>NUCLEOTIDE SEQUENCE [GENOMIC DNA]</scope>
</reference>